<protein>
    <recommendedName>
        <fullName evidence="1">Leucine--tRNA ligase</fullName>
        <ecNumber evidence="1">6.1.1.4</ecNumber>
    </recommendedName>
    <alternativeName>
        <fullName evidence="1">Leucyl-tRNA synthetase</fullName>
        <shortName evidence="1">LeuRS</shortName>
    </alternativeName>
</protein>
<organism>
    <name type="scientific">Xanthomonas oryzae pv. oryzae (strain PXO99A)</name>
    <dbReference type="NCBI Taxonomy" id="360094"/>
    <lineage>
        <taxon>Bacteria</taxon>
        <taxon>Pseudomonadati</taxon>
        <taxon>Pseudomonadota</taxon>
        <taxon>Gammaproteobacteria</taxon>
        <taxon>Lysobacterales</taxon>
        <taxon>Lysobacteraceae</taxon>
        <taxon>Xanthomonas</taxon>
    </lineage>
</organism>
<accession>B2SWH2</accession>
<reference key="1">
    <citation type="journal article" date="2008" name="BMC Genomics">
        <title>Genome sequence and rapid evolution of the rice pathogen Xanthomonas oryzae pv. oryzae PXO99A.</title>
        <authorList>
            <person name="Salzberg S.L."/>
            <person name="Sommer D.D."/>
            <person name="Schatz M.C."/>
            <person name="Phillippy A.M."/>
            <person name="Rabinowicz P.D."/>
            <person name="Tsuge S."/>
            <person name="Furutani A."/>
            <person name="Ochiai H."/>
            <person name="Delcher A.L."/>
            <person name="Kelley D."/>
            <person name="Madupu R."/>
            <person name="Puiu D."/>
            <person name="Radune D."/>
            <person name="Shumway M."/>
            <person name="Trapnell C."/>
            <person name="Aparna G."/>
            <person name="Jha G."/>
            <person name="Pandey A."/>
            <person name="Patil P.B."/>
            <person name="Ishihara H."/>
            <person name="Meyer D.F."/>
            <person name="Szurek B."/>
            <person name="Verdier V."/>
            <person name="Koebnik R."/>
            <person name="Dow J.M."/>
            <person name="Ryan R.P."/>
            <person name="Hirata H."/>
            <person name="Tsuyumu S."/>
            <person name="Won Lee S."/>
            <person name="Seo Y.-S."/>
            <person name="Sriariyanum M."/>
            <person name="Ronald P.C."/>
            <person name="Sonti R.V."/>
            <person name="Van Sluys M.-A."/>
            <person name="Leach J.E."/>
            <person name="White F.F."/>
            <person name="Bogdanove A.J."/>
        </authorList>
    </citation>
    <scope>NUCLEOTIDE SEQUENCE [LARGE SCALE GENOMIC DNA]</scope>
    <source>
        <strain>PXO99A</strain>
    </source>
</reference>
<dbReference type="EC" id="6.1.1.4" evidence="1"/>
<dbReference type="EMBL" id="CP000967">
    <property type="protein sequence ID" value="ACD60183.1"/>
    <property type="molecule type" value="Genomic_DNA"/>
</dbReference>
<dbReference type="RefSeq" id="WP_012445585.1">
    <property type="nucleotide sequence ID" value="NC_010717.2"/>
</dbReference>
<dbReference type="SMR" id="B2SWH2"/>
<dbReference type="KEGG" id="xop:PXO_01874"/>
<dbReference type="eggNOG" id="COG0495">
    <property type="taxonomic scope" value="Bacteria"/>
</dbReference>
<dbReference type="HOGENOM" id="CLU_004427_0_0_6"/>
<dbReference type="Proteomes" id="UP000001740">
    <property type="component" value="Chromosome"/>
</dbReference>
<dbReference type="GO" id="GO:0005829">
    <property type="term" value="C:cytosol"/>
    <property type="evidence" value="ECO:0007669"/>
    <property type="project" value="TreeGrafter"/>
</dbReference>
<dbReference type="GO" id="GO:0002161">
    <property type="term" value="F:aminoacyl-tRNA deacylase activity"/>
    <property type="evidence" value="ECO:0007669"/>
    <property type="project" value="InterPro"/>
</dbReference>
<dbReference type="GO" id="GO:0005524">
    <property type="term" value="F:ATP binding"/>
    <property type="evidence" value="ECO:0007669"/>
    <property type="project" value="UniProtKB-UniRule"/>
</dbReference>
<dbReference type="GO" id="GO:0004823">
    <property type="term" value="F:leucine-tRNA ligase activity"/>
    <property type="evidence" value="ECO:0007669"/>
    <property type="project" value="UniProtKB-UniRule"/>
</dbReference>
<dbReference type="GO" id="GO:0006429">
    <property type="term" value="P:leucyl-tRNA aminoacylation"/>
    <property type="evidence" value="ECO:0007669"/>
    <property type="project" value="UniProtKB-UniRule"/>
</dbReference>
<dbReference type="CDD" id="cd07958">
    <property type="entry name" value="Anticodon_Ia_Leu_BEm"/>
    <property type="match status" value="1"/>
</dbReference>
<dbReference type="CDD" id="cd00812">
    <property type="entry name" value="LeuRS_core"/>
    <property type="match status" value="1"/>
</dbReference>
<dbReference type="FunFam" id="1.10.730.10:FF:000003">
    <property type="entry name" value="Leucine--tRNA ligase"/>
    <property type="match status" value="1"/>
</dbReference>
<dbReference type="FunFam" id="2.20.28.290:FF:000001">
    <property type="entry name" value="Leucine--tRNA ligase"/>
    <property type="match status" value="1"/>
</dbReference>
<dbReference type="FunFam" id="3.10.20.590:FF:000001">
    <property type="entry name" value="Leucine--tRNA ligase"/>
    <property type="match status" value="1"/>
</dbReference>
<dbReference type="FunFam" id="3.40.50.620:FF:000003">
    <property type="entry name" value="Leucine--tRNA ligase"/>
    <property type="match status" value="1"/>
</dbReference>
<dbReference type="FunFam" id="3.40.50.620:FF:000124">
    <property type="entry name" value="Leucine--tRNA ligase"/>
    <property type="match status" value="1"/>
</dbReference>
<dbReference type="FunFam" id="3.90.740.10:FF:000012">
    <property type="entry name" value="Leucine--tRNA ligase"/>
    <property type="match status" value="1"/>
</dbReference>
<dbReference type="Gene3D" id="2.20.28.290">
    <property type="match status" value="1"/>
</dbReference>
<dbReference type="Gene3D" id="3.10.20.590">
    <property type="match status" value="1"/>
</dbReference>
<dbReference type="Gene3D" id="3.40.50.620">
    <property type="entry name" value="HUPs"/>
    <property type="match status" value="2"/>
</dbReference>
<dbReference type="Gene3D" id="1.10.730.10">
    <property type="entry name" value="Isoleucyl-tRNA Synthetase, Domain 1"/>
    <property type="match status" value="1"/>
</dbReference>
<dbReference type="Gene3D" id="3.90.740.10">
    <property type="entry name" value="Valyl/Leucyl/Isoleucyl-tRNA synthetase, editing domain"/>
    <property type="match status" value="1"/>
</dbReference>
<dbReference type="HAMAP" id="MF_00049_B">
    <property type="entry name" value="Leu_tRNA_synth_B"/>
    <property type="match status" value="1"/>
</dbReference>
<dbReference type="InterPro" id="IPR001412">
    <property type="entry name" value="aa-tRNA-synth_I_CS"/>
</dbReference>
<dbReference type="InterPro" id="IPR002300">
    <property type="entry name" value="aa-tRNA-synth_Ia"/>
</dbReference>
<dbReference type="InterPro" id="IPR002302">
    <property type="entry name" value="Leu-tRNA-ligase"/>
</dbReference>
<dbReference type="InterPro" id="IPR025709">
    <property type="entry name" value="Leu_tRNA-synth_edit"/>
</dbReference>
<dbReference type="InterPro" id="IPR013155">
    <property type="entry name" value="M/V/L/I-tRNA-synth_anticd-bd"/>
</dbReference>
<dbReference type="InterPro" id="IPR015413">
    <property type="entry name" value="Methionyl/Leucyl_tRNA_Synth"/>
</dbReference>
<dbReference type="InterPro" id="IPR014729">
    <property type="entry name" value="Rossmann-like_a/b/a_fold"/>
</dbReference>
<dbReference type="InterPro" id="IPR009080">
    <property type="entry name" value="tRNAsynth_Ia_anticodon-bd"/>
</dbReference>
<dbReference type="InterPro" id="IPR009008">
    <property type="entry name" value="Val/Leu/Ile-tRNA-synth_edit"/>
</dbReference>
<dbReference type="NCBIfam" id="TIGR00396">
    <property type="entry name" value="leuS_bact"/>
    <property type="match status" value="1"/>
</dbReference>
<dbReference type="PANTHER" id="PTHR43740:SF2">
    <property type="entry name" value="LEUCINE--TRNA LIGASE, MITOCHONDRIAL"/>
    <property type="match status" value="1"/>
</dbReference>
<dbReference type="PANTHER" id="PTHR43740">
    <property type="entry name" value="LEUCYL-TRNA SYNTHETASE"/>
    <property type="match status" value="1"/>
</dbReference>
<dbReference type="Pfam" id="PF08264">
    <property type="entry name" value="Anticodon_1"/>
    <property type="match status" value="1"/>
</dbReference>
<dbReference type="Pfam" id="PF00133">
    <property type="entry name" value="tRNA-synt_1"/>
    <property type="match status" value="2"/>
</dbReference>
<dbReference type="Pfam" id="PF13603">
    <property type="entry name" value="tRNA-synt_1_2"/>
    <property type="match status" value="1"/>
</dbReference>
<dbReference type="Pfam" id="PF09334">
    <property type="entry name" value="tRNA-synt_1g"/>
    <property type="match status" value="1"/>
</dbReference>
<dbReference type="PRINTS" id="PR00985">
    <property type="entry name" value="TRNASYNTHLEU"/>
</dbReference>
<dbReference type="SUPFAM" id="SSF47323">
    <property type="entry name" value="Anticodon-binding domain of a subclass of class I aminoacyl-tRNA synthetases"/>
    <property type="match status" value="1"/>
</dbReference>
<dbReference type="SUPFAM" id="SSF52374">
    <property type="entry name" value="Nucleotidylyl transferase"/>
    <property type="match status" value="1"/>
</dbReference>
<dbReference type="SUPFAM" id="SSF50677">
    <property type="entry name" value="ValRS/IleRS/LeuRS editing domain"/>
    <property type="match status" value="1"/>
</dbReference>
<dbReference type="PROSITE" id="PS00178">
    <property type="entry name" value="AA_TRNA_LIGASE_I"/>
    <property type="match status" value="1"/>
</dbReference>
<comment type="catalytic activity">
    <reaction evidence="1">
        <text>tRNA(Leu) + L-leucine + ATP = L-leucyl-tRNA(Leu) + AMP + diphosphate</text>
        <dbReference type="Rhea" id="RHEA:11688"/>
        <dbReference type="Rhea" id="RHEA-COMP:9613"/>
        <dbReference type="Rhea" id="RHEA-COMP:9622"/>
        <dbReference type="ChEBI" id="CHEBI:30616"/>
        <dbReference type="ChEBI" id="CHEBI:33019"/>
        <dbReference type="ChEBI" id="CHEBI:57427"/>
        <dbReference type="ChEBI" id="CHEBI:78442"/>
        <dbReference type="ChEBI" id="CHEBI:78494"/>
        <dbReference type="ChEBI" id="CHEBI:456215"/>
        <dbReference type="EC" id="6.1.1.4"/>
    </reaction>
</comment>
<comment type="subcellular location">
    <subcellularLocation>
        <location evidence="1">Cytoplasm</location>
    </subcellularLocation>
</comment>
<comment type="similarity">
    <text evidence="1">Belongs to the class-I aminoacyl-tRNA synthetase family.</text>
</comment>
<name>SYL_XANOP</name>
<evidence type="ECO:0000255" key="1">
    <source>
        <dbReference type="HAMAP-Rule" id="MF_00049"/>
    </source>
</evidence>
<evidence type="ECO:0000256" key="2">
    <source>
        <dbReference type="SAM" id="MobiDB-lite"/>
    </source>
</evidence>
<proteinExistence type="inferred from homology"/>
<keyword id="KW-0030">Aminoacyl-tRNA synthetase</keyword>
<keyword id="KW-0067">ATP-binding</keyword>
<keyword id="KW-0963">Cytoplasm</keyword>
<keyword id="KW-0436">Ligase</keyword>
<keyword id="KW-0547">Nucleotide-binding</keyword>
<keyword id="KW-0648">Protein biosynthesis</keyword>
<sequence length="880" mass="98464">MSTVEPNVYDPHQVETSAQQFWDATRAFQVDENSEKPKFYCLSMLPYPSGALHMGHVRNYTISDVVSRYKRMTGHNVLQPMGWDAFGLPAENAAIKNKTAPAKWTYANIAHMRAQLKSLGYAIDWSREFATCTPDYYVHEQRMFTRLMRKGLAYRRNAVVNWDPIDQTVLANEQVIDGRGWRSGAVVEKREIPQWFLRITDYAQELLDGLDQLDGWPDSVKTMQRNWIGRSEGLEIQFDVRDTNGAALDPLRVFTTRPDTLMGVTFVSIAAEHPLALHAAKSNPELAALLETLKHGGVSEAELETQEKRGMAIGLTAVHPISGEQVPVWVANFVLMGYGTGAVMAVPGHDQRDFEFANKYGLPIVQVVKLREPRNDDEQRWDATEWRDWYTDKSRELELINSAEFDGLDFGGAFEALAERFERKGQGQRRVNYRLRDWGVSRQRYWGCPIPVIYCPKCGAVPVPEDQLPVVLPENVEFAGTGSPIKTEPTWRQTTCPDCGGPAERETDTFDTFMESSWYVARYTSPNAREMVDRRANYWMPADLYVGGIEHAILHLMYFRFYHKLMRDARLVDSDEPVTNLLTQGMVIADTFYRDADNGGKDWINPADVEIQRDERGRVTGAVLIADGQPVHIGGTEKMSKSKNNGVDPQSMVAKYGADTVRLFSMFAAPPEQSLEWNEAGVDGMARFMRRLWAQVHKHVGEGAAVALDVAALSAEQKAIRRKTHETIGKVSDDYGRRHSFNTAIAAVMELSNALAKFDDASDQGRAVRQEALEAMVLLLNPITPHASHALWQVLGRGETLLENVAFPQADVSALVRDALTLAVQINGKLRGTIDVAADAAREQIEALAQAEPNAAKFLDGLSVRKIIIVPGKIVNIVAG</sequence>
<feature type="chain" id="PRO_1000091379" description="Leucine--tRNA ligase">
    <location>
        <begin position="1"/>
        <end position="880"/>
    </location>
</feature>
<feature type="region of interest" description="Disordered" evidence="2">
    <location>
        <begin position="483"/>
        <end position="502"/>
    </location>
</feature>
<feature type="short sequence motif" description="'HIGH' region">
    <location>
        <begin position="46"/>
        <end position="56"/>
    </location>
</feature>
<feature type="short sequence motif" description="'KMSKS' region">
    <location>
        <begin position="638"/>
        <end position="642"/>
    </location>
</feature>
<feature type="binding site" evidence="1">
    <location>
        <position position="641"/>
    </location>
    <ligand>
        <name>ATP</name>
        <dbReference type="ChEBI" id="CHEBI:30616"/>
    </ligand>
</feature>
<gene>
    <name evidence="1" type="primary">leuS</name>
    <name type="ordered locus">PXO_01874</name>
</gene>